<sequence length="13" mass="1534">ILGKFCDEIKRIV</sequence>
<evidence type="ECO:0000250" key="1"/>
<evidence type="ECO:0000269" key="2">
    <source>
    </source>
</evidence>
<evidence type="ECO:0000303" key="3">
    <source>
    </source>
</evidence>
<evidence type="ECO:0000305" key="4"/>
<evidence type="ECO:0000305" key="5">
    <source>
    </source>
</evidence>
<reference key="1">
    <citation type="journal article" date="2014" name="Antiviral Res.">
        <title>Inhibitory activity and mechanism of two scorpion venom peptides against herpes simplex virus type 1.</title>
        <authorList>
            <person name="Hong W."/>
            <person name="Li T."/>
            <person name="Song Y."/>
            <person name="Zhang R."/>
            <person name="Zeng Z."/>
            <person name="Han S."/>
            <person name="Zhang X."/>
            <person name="Wu Y."/>
            <person name="Li W."/>
            <person name="Cao Z."/>
        </authorList>
    </citation>
    <scope>NUCLEOTIDE SEQUENCE [MRNA]</scope>
    <scope>SYNTHESIS</scope>
    <scope>FUNCTION</scope>
</reference>
<dbReference type="GO" id="GO:0005576">
    <property type="term" value="C:extracellular region"/>
    <property type="evidence" value="ECO:0007669"/>
    <property type="project" value="UniProtKB-SubCell"/>
</dbReference>
<dbReference type="GO" id="GO:0016020">
    <property type="term" value="C:membrane"/>
    <property type="evidence" value="ECO:0007669"/>
    <property type="project" value="UniProtKB-KW"/>
</dbReference>
<dbReference type="GO" id="GO:0044218">
    <property type="term" value="C:other organism cell membrane"/>
    <property type="evidence" value="ECO:0007669"/>
    <property type="project" value="UniProtKB-KW"/>
</dbReference>
<accession>P0DMF0</accession>
<comment type="function">
    <text evidence="1 2">Amphipathic peptide with antimicrobial activity.</text>
</comment>
<comment type="subcellular location">
    <subcellularLocation>
        <location evidence="1">Secreted</location>
    </subcellularLocation>
    <subcellularLocation>
        <location evidence="1">Target cell membrane</location>
    </subcellularLocation>
    <text evidence="1">Forms an alpha-helical membrane channel in the prey.</text>
</comment>
<comment type="tissue specificity">
    <text evidence="4">Expressed by the venom gland.</text>
</comment>
<comment type="miscellaneous">
    <text evidence="5">Negative results: does not show antiviral activity.</text>
</comment>
<comment type="similarity">
    <text evidence="4">Belongs to the non-disulfide-bridged peptide (NDBP) superfamily. Short antimicrobial peptide (group 4) family.</text>
</comment>
<protein>
    <recommendedName>
        <fullName evidence="3">Peptide Hp1478</fullName>
    </recommendedName>
</protein>
<proteinExistence type="inferred from homology"/>
<feature type="peptide" id="PRO_0000428692" description="Peptide Hp1478">
    <location>
        <begin position="1"/>
        <end position="13"/>
    </location>
</feature>
<organism>
    <name type="scientific">Heterometrus petersii</name>
    <name type="common">Asian forest scorpion</name>
    <dbReference type="NCBI Taxonomy" id="754296"/>
    <lineage>
        <taxon>Eukaryota</taxon>
        <taxon>Metazoa</taxon>
        <taxon>Ecdysozoa</taxon>
        <taxon>Arthropoda</taxon>
        <taxon>Chelicerata</taxon>
        <taxon>Arachnida</taxon>
        <taxon>Scorpiones</taxon>
        <taxon>Iurida</taxon>
        <taxon>Scorpionoidea</taxon>
        <taxon>Scorpionidae</taxon>
        <taxon>Heterometrinae</taxon>
        <taxon>Heterometrus</taxon>
    </lineage>
</organism>
<keyword id="KW-0929">Antimicrobial</keyword>
<keyword id="KW-0472">Membrane</keyword>
<keyword id="KW-0964">Secreted</keyword>
<keyword id="KW-1052">Target cell membrane</keyword>
<keyword id="KW-1053">Target membrane</keyword>
<name>NDB4X_HETPE</name>